<accession>O27429</accession>
<name>METK_METTH</name>
<feature type="chain" id="PRO_0000150032" description="S-adenosylmethionine synthase">
    <location>
        <begin position="1"/>
        <end position="401"/>
    </location>
</feature>
<feature type="binding site" evidence="2">
    <location>
        <begin position="135"/>
        <end position="140"/>
    </location>
    <ligand>
        <name>ATP</name>
        <dbReference type="ChEBI" id="CHEBI:30616"/>
    </ligand>
</feature>
<evidence type="ECO:0000250" key="1"/>
<evidence type="ECO:0000255" key="2"/>
<evidence type="ECO:0000305" key="3"/>
<comment type="function">
    <text evidence="1">Catalyzes the formation of S-adenosylmethionine from methionine and ATP.</text>
</comment>
<comment type="catalytic activity">
    <reaction>
        <text>L-methionine + ATP + H2O = S-adenosyl-L-methionine + phosphate + diphosphate</text>
        <dbReference type="Rhea" id="RHEA:21080"/>
        <dbReference type="ChEBI" id="CHEBI:15377"/>
        <dbReference type="ChEBI" id="CHEBI:30616"/>
        <dbReference type="ChEBI" id="CHEBI:33019"/>
        <dbReference type="ChEBI" id="CHEBI:43474"/>
        <dbReference type="ChEBI" id="CHEBI:57844"/>
        <dbReference type="ChEBI" id="CHEBI:59789"/>
        <dbReference type="EC" id="2.5.1.6"/>
    </reaction>
</comment>
<comment type="cofactor">
    <cofactor evidence="1">
        <name>Mg(2+)</name>
        <dbReference type="ChEBI" id="CHEBI:18420"/>
    </cofactor>
</comment>
<comment type="pathway">
    <text>Amino-acid biosynthesis; S-adenosyl-L-methionine biosynthesis; S-adenosyl-L-methionine from L-methionine: step 1/1.</text>
</comment>
<comment type="similarity">
    <text evidence="3">Belongs to the AdoMet synthase 2 family.</text>
</comment>
<comment type="sequence caution" evidence="3">
    <conflict type="erroneous initiation">
        <sequence resource="EMBL-CDS" id="AAB85853"/>
    </conflict>
</comment>
<dbReference type="EC" id="2.5.1.6"/>
<dbReference type="EMBL" id="AE000666">
    <property type="protein sequence ID" value="AAB85853.1"/>
    <property type="status" value="ALT_INIT"/>
    <property type="molecule type" value="Genomic_DNA"/>
</dbReference>
<dbReference type="PIR" id="A69050">
    <property type="entry name" value="A69050"/>
</dbReference>
<dbReference type="RefSeq" id="WP_048061035.1">
    <property type="nucleotide sequence ID" value="NC_000916.1"/>
</dbReference>
<dbReference type="SMR" id="O27429"/>
<dbReference type="FunCoup" id="O27429">
    <property type="interactions" value="168"/>
</dbReference>
<dbReference type="STRING" id="187420.MTH_1376"/>
<dbReference type="PaxDb" id="187420-MTH_1376"/>
<dbReference type="EnsemblBacteria" id="AAB85853">
    <property type="protein sequence ID" value="AAB85853"/>
    <property type="gene ID" value="MTH_1376"/>
</dbReference>
<dbReference type="KEGG" id="mth:MTH_1376"/>
<dbReference type="PATRIC" id="fig|187420.15.peg.1341"/>
<dbReference type="HOGENOM" id="CLU_057642_0_0_2"/>
<dbReference type="InParanoid" id="O27429"/>
<dbReference type="UniPathway" id="UPA00315">
    <property type="reaction ID" value="UER00080"/>
</dbReference>
<dbReference type="Proteomes" id="UP000005223">
    <property type="component" value="Chromosome"/>
</dbReference>
<dbReference type="GO" id="GO:0005524">
    <property type="term" value="F:ATP binding"/>
    <property type="evidence" value="ECO:0007669"/>
    <property type="project" value="UniProtKB-UniRule"/>
</dbReference>
<dbReference type="GO" id="GO:0000287">
    <property type="term" value="F:magnesium ion binding"/>
    <property type="evidence" value="ECO:0007669"/>
    <property type="project" value="UniProtKB-UniRule"/>
</dbReference>
<dbReference type="GO" id="GO:0004478">
    <property type="term" value="F:methionine adenosyltransferase activity"/>
    <property type="evidence" value="ECO:0007669"/>
    <property type="project" value="UniProtKB-UniRule"/>
</dbReference>
<dbReference type="GO" id="GO:0006730">
    <property type="term" value="P:one-carbon metabolic process"/>
    <property type="evidence" value="ECO:0007669"/>
    <property type="project" value="UniProtKB-KW"/>
</dbReference>
<dbReference type="GO" id="GO:0006556">
    <property type="term" value="P:S-adenosylmethionine biosynthetic process"/>
    <property type="evidence" value="ECO:0007669"/>
    <property type="project" value="UniProtKB-UniRule"/>
</dbReference>
<dbReference type="Gene3D" id="3.30.300.10">
    <property type="match status" value="1"/>
</dbReference>
<dbReference type="Gene3D" id="3.30.300.280">
    <property type="entry name" value="S-adenosylmethionine synthetase, C-terminal domain"/>
    <property type="match status" value="2"/>
</dbReference>
<dbReference type="HAMAP" id="MF_00136">
    <property type="entry name" value="S_AdoMet_synth2"/>
    <property type="match status" value="1"/>
</dbReference>
<dbReference type="InterPro" id="IPR027790">
    <property type="entry name" value="AdoMet_synthase_2_family"/>
</dbReference>
<dbReference type="InterPro" id="IPR042544">
    <property type="entry name" value="AdoMet_synthase_3"/>
</dbReference>
<dbReference type="InterPro" id="IPR002795">
    <property type="entry name" value="S-AdoMet_synthetase_arc"/>
</dbReference>
<dbReference type="NCBIfam" id="NF003364">
    <property type="entry name" value="PRK04439.1-3"/>
    <property type="match status" value="1"/>
</dbReference>
<dbReference type="NCBIfam" id="NF003366">
    <property type="entry name" value="PRK04439.1-5"/>
    <property type="match status" value="1"/>
</dbReference>
<dbReference type="PANTHER" id="PTHR36697">
    <property type="entry name" value="S-ADENOSYLMETHIONINE SYNTHASE"/>
    <property type="match status" value="1"/>
</dbReference>
<dbReference type="PANTHER" id="PTHR36697:SF1">
    <property type="entry name" value="S-ADENOSYLMETHIONINE SYNTHASE"/>
    <property type="match status" value="1"/>
</dbReference>
<dbReference type="Pfam" id="PF01941">
    <property type="entry name" value="AdoMet_Synthase"/>
    <property type="match status" value="1"/>
</dbReference>
<gene>
    <name type="primary">mat</name>
    <name type="ordered locus">MTH_1376</name>
</gene>
<proteinExistence type="inferred from homology"/>
<keyword id="KW-0067">ATP-binding</keyword>
<keyword id="KW-0460">Magnesium</keyword>
<keyword id="KW-0547">Nucleotide-binding</keyword>
<keyword id="KW-0554">One-carbon metabolism</keyword>
<keyword id="KW-1185">Reference proteome</keyword>
<keyword id="KW-0808">Transferase</keyword>
<organism>
    <name type="scientific">Methanothermobacter thermautotrophicus (strain ATCC 29096 / DSM 1053 / JCM 10044 / NBRC 100330 / Delta H)</name>
    <name type="common">Methanobacterium thermoautotrophicum</name>
    <dbReference type="NCBI Taxonomy" id="187420"/>
    <lineage>
        <taxon>Archaea</taxon>
        <taxon>Methanobacteriati</taxon>
        <taxon>Methanobacteriota</taxon>
        <taxon>Methanomada group</taxon>
        <taxon>Methanobacteria</taxon>
        <taxon>Methanobacteriales</taxon>
        <taxon>Methanobacteriaceae</taxon>
        <taxon>Methanothermobacter</taxon>
    </lineage>
</organism>
<protein>
    <recommendedName>
        <fullName>S-adenosylmethionine synthase</fullName>
        <shortName>AdoMet synthase</shortName>
        <ecNumber>2.5.1.6</ecNumber>
    </recommendedName>
    <alternativeName>
        <fullName>Methionine adenosyltransferase</fullName>
    </alternativeName>
</protein>
<reference key="1">
    <citation type="journal article" date="1997" name="J. Bacteriol.">
        <title>Complete genome sequence of Methanobacterium thermoautotrophicum deltaH: functional analysis and comparative genomics.</title>
        <authorList>
            <person name="Smith D.R."/>
            <person name="Doucette-Stamm L.A."/>
            <person name="Deloughery C."/>
            <person name="Lee H.-M."/>
            <person name="Dubois J."/>
            <person name="Aldredge T."/>
            <person name="Bashirzadeh R."/>
            <person name="Blakely D."/>
            <person name="Cook R."/>
            <person name="Gilbert K."/>
            <person name="Harrison D."/>
            <person name="Hoang L."/>
            <person name="Keagle P."/>
            <person name="Lumm W."/>
            <person name="Pothier B."/>
            <person name="Qiu D."/>
            <person name="Spadafora R."/>
            <person name="Vicare R."/>
            <person name="Wang Y."/>
            <person name="Wierzbowski J."/>
            <person name="Gibson R."/>
            <person name="Jiwani N."/>
            <person name="Caruso A."/>
            <person name="Bush D."/>
            <person name="Safer H."/>
            <person name="Patwell D."/>
            <person name="Prabhakar S."/>
            <person name="McDougall S."/>
            <person name="Shimer G."/>
            <person name="Goyal A."/>
            <person name="Pietrovski S."/>
            <person name="Church G.M."/>
            <person name="Daniels C.J."/>
            <person name="Mao J.-I."/>
            <person name="Rice P."/>
            <person name="Noelling J."/>
            <person name="Reeve J.N."/>
        </authorList>
    </citation>
    <scope>NUCLEOTIDE SEQUENCE [LARGE SCALE GENOMIC DNA]</scope>
    <source>
        <strain>ATCC 29096 / DSM 1053 / JCM 10044 / NBRC 100330 / Delta H</strain>
    </source>
</reference>
<sequence length="401" mass="43757">MRNIIVEPLNQTPIEDQKVEIVERKGIGHPDSISDGIAESVSRALCNAYLDRFGAIMHHNTDEVQITAGESAPQFGGGEVIKPMEILLTGRGIAEVDGEKIGLDRIAISAAKEYLRENILNLDVETCAVVECKIGHGSGDLRDVFARKGRAPLSNDTSFGVGFAPFSETERIVMEAENLLNSPEFKKKHPAVGEDIKVMGLRENDNITLTVACAMVDRYVSDLEEYLEVKNVVRDEVFKIASKLTDRNLEVFVNTADRCEDDEPSVYITVTGTSAEMGDDGSVGRGNRANGLITPNRPMSMEATSGKNPINHVGKIYNLLSNQMAGDIVESVEGVKQVHIMILSQIGKPIDHPKAATAQVILEDGYTMDEVTGKVSGVMDAWLEDIPSITEMLVKGQLRTF</sequence>